<sequence>MAAKDVKFSRDARERILRGVDILADAVKVTLGPKGRNVVLDKAFGAPRITKDGVSVAKEIELKDKFENMGAQMLREVASKTNDLAGDGTTTATVLAQAIVREGMKSVAAGMNPMDLKRGIDLAATKVVESLRSRSKPVSDFNEVAQVGIISANGDEEVGRRIAEAMEKVGKEGVITVEEAKGFDFELDVVEGMQFDRGYLSPYFITNPEKMVAELADPYILIYEKKLSNLQSILPILESVVQSGRPLLIIAEDIEGEALATLVVNKLRGGLKVAAVKAPGFGDRRKAMLEDIAILTKGELISEDLGIKLENVTLNMLGSAKRVSITKENTTIVDGAGDQSTIKDRVEAIRSQIEATTSDYDREKLQERVAKLAGGVAVIKVGGATEVEVKERKDRVDDALHATRAAVQEGIVPGGGTALLYATKTLEGLNGVNEDQQRGIDIVRRALQAPVRQIAQNAGFDGAVVAGKLIDGNDDKIGFNAQTEKYEDLAATGVIDPTKVVRTALQDAASVAGLLITTEAAVGDLPEDKPAPAMPGGMGGMGGMDF</sequence>
<protein>
    <recommendedName>
        <fullName evidence="1">Chaperonin GroEL</fullName>
        <ecNumber evidence="1">5.6.1.7</ecNumber>
    </recommendedName>
    <alternativeName>
        <fullName evidence="1">60 kDa chaperonin</fullName>
    </alternativeName>
    <alternativeName>
        <fullName evidence="1">Chaperonin-60</fullName>
        <shortName evidence="1">Cpn60</shortName>
    </alternativeName>
</protein>
<keyword id="KW-0067">ATP-binding</keyword>
<keyword id="KW-0143">Chaperone</keyword>
<keyword id="KW-0963">Cytoplasm</keyword>
<keyword id="KW-0413">Isomerase</keyword>
<keyword id="KW-0547">Nucleotide-binding</keyword>
<keyword id="KW-1185">Reference proteome</keyword>
<comment type="function">
    <text evidence="1">Together with its co-chaperonin GroES, plays an essential role in assisting protein folding. The GroEL-GroES system forms a nano-cage that allows encapsulation of the non-native substrate proteins and provides a physical environment optimized to promote and accelerate protein folding.</text>
</comment>
<comment type="catalytic activity">
    <reaction evidence="1">
        <text>ATP + H2O + a folded polypeptide = ADP + phosphate + an unfolded polypeptide.</text>
        <dbReference type="EC" id="5.6.1.7"/>
    </reaction>
</comment>
<comment type="subunit">
    <text evidence="1">Forms a cylinder of 14 subunits composed of two heptameric rings stacked back-to-back. Interacts with the co-chaperonin GroES.</text>
</comment>
<comment type="subcellular location">
    <subcellularLocation>
        <location evidence="1">Cytoplasm</location>
    </subcellularLocation>
</comment>
<comment type="similarity">
    <text evidence="1">Belongs to the chaperonin (HSP60) family.</text>
</comment>
<reference key="1">
    <citation type="journal article" date="1994" name="Gene">
        <title>Cloning, sequencing and expression of stress genes from the ethanol-producing bacterium Zymomonas mobilis: the groESL operon.</title>
        <authorList>
            <person name="Barbosa M.F."/>
            <person name="Yomano L.P."/>
            <person name="Ingram L.O."/>
        </authorList>
    </citation>
    <scope>NUCLEOTIDE SEQUENCE [GENOMIC DNA]</scope>
    <source>
        <strain>ATCC 31821 / ZM4 / CP4</strain>
    </source>
</reference>
<reference key="2">
    <citation type="journal article" date="2005" name="Nat. Biotechnol.">
        <title>The genome sequence of the ethanologenic bacterium Zymomonas mobilis ZM4.</title>
        <authorList>
            <person name="Seo J.-S."/>
            <person name="Chong H."/>
            <person name="Park H.S."/>
            <person name="Yoon K.-O."/>
            <person name="Jung C."/>
            <person name="Kim J.J."/>
            <person name="Hong J.H."/>
            <person name="Kim H."/>
            <person name="Kim J.-H."/>
            <person name="Kil J.-I."/>
            <person name="Park C.J."/>
            <person name="Oh H.-M."/>
            <person name="Lee J.-S."/>
            <person name="Jin S.-J."/>
            <person name="Um H.-W."/>
            <person name="Lee H.-J."/>
            <person name="Oh S.-J."/>
            <person name="Kim J.Y."/>
            <person name="Kang H.L."/>
            <person name="Lee S.Y."/>
            <person name="Lee K.J."/>
            <person name="Kang H.S."/>
        </authorList>
    </citation>
    <scope>NUCLEOTIDE SEQUENCE [LARGE SCALE GENOMIC DNA]</scope>
    <source>
        <strain>ATCC 31821 / ZM4 / CP4</strain>
    </source>
</reference>
<organism>
    <name type="scientific">Zymomonas mobilis subsp. mobilis (strain ATCC 31821 / ZM4 / CP4)</name>
    <dbReference type="NCBI Taxonomy" id="264203"/>
    <lineage>
        <taxon>Bacteria</taxon>
        <taxon>Pseudomonadati</taxon>
        <taxon>Pseudomonadota</taxon>
        <taxon>Alphaproteobacteria</taxon>
        <taxon>Sphingomonadales</taxon>
        <taxon>Zymomonadaceae</taxon>
        <taxon>Zymomonas</taxon>
    </lineage>
</organism>
<evidence type="ECO:0000255" key="1">
    <source>
        <dbReference type="HAMAP-Rule" id="MF_00600"/>
    </source>
</evidence>
<evidence type="ECO:0000256" key="2">
    <source>
        <dbReference type="SAM" id="MobiDB-lite"/>
    </source>
</evidence>
<evidence type="ECO:0000305" key="3"/>
<dbReference type="EC" id="5.6.1.7" evidence="1"/>
<dbReference type="EMBL" id="L11654">
    <property type="protein sequence ID" value="AAA62399.1"/>
    <property type="molecule type" value="Genomic_DNA"/>
</dbReference>
<dbReference type="EMBL" id="AE008692">
    <property type="protein sequence ID" value="AAV90553.1"/>
    <property type="molecule type" value="Genomic_DNA"/>
</dbReference>
<dbReference type="PIR" id="JC2564">
    <property type="entry name" value="JC2564"/>
</dbReference>
<dbReference type="RefSeq" id="WP_011241653.1">
    <property type="nucleotide sequence ID" value="NZ_CP035711.1"/>
</dbReference>
<dbReference type="SMR" id="P48220"/>
<dbReference type="STRING" id="264203.ZMO1929"/>
<dbReference type="KEGG" id="zmo:ZMO1929"/>
<dbReference type="eggNOG" id="COG0459">
    <property type="taxonomic scope" value="Bacteria"/>
</dbReference>
<dbReference type="HOGENOM" id="CLU_016503_3_0_5"/>
<dbReference type="Proteomes" id="UP000001173">
    <property type="component" value="Chromosome"/>
</dbReference>
<dbReference type="GO" id="GO:0005737">
    <property type="term" value="C:cytoplasm"/>
    <property type="evidence" value="ECO:0007669"/>
    <property type="project" value="UniProtKB-SubCell"/>
</dbReference>
<dbReference type="GO" id="GO:0005524">
    <property type="term" value="F:ATP binding"/>
    <property type="evidence" value="ECO:0007669"/>
    <property type="project" value="UniProtKB-UniRule"/>
</dbReference>
<dbReference type="GO" id="GO:0140662">
    <property type="term" value="F:ATP-dependent protein folding chaperone"/>
    <property type="evidence" value="ECO:0007669"/>
    <property type="project" value="InterPro"/>
</dbReference>
<dbReference type="GO" id="GO:0016853">
    <property type="term" value="F:isomerase activity"/>
    <property type="evidence" value="ECO:0007669"/>
    <property type="project" value="UniProtKB-KW"/>
</dbReference>
<dbReference type="GO" id="GO:0051082">
    <property type="term" value="F:unfolded protein binding"/>
    <property type="evidence" value="ECO:0007669"/>
    <property type="project" value="UniProtKB-UniRule"/>
</dbReference>
<dbReference type="GO" id="GO:0042026">
    <property type="term" value="P:protein refolding"/>
    <property type="evidence" value="ECO:0007669"/>
    <property type="project" value="UniProtKB-UniRule"/>
</dbReference>
<dbReference type="CDD" id="cd03344">
    <property type="entry name" value="GroEL"/>
    <property type="match status" value="1"/>
</dbReference>
<dbReference type="FunFam" id="1.10.560.10:FF:000001">
    <property type="entry name" value="60 kDa chaperonin"/>
    <property type="match status" value="1"/>
</dbReference>
<dbReference type="FunFam" id="3.50.7.10:FF:000001">
    <property type="entry name" value="60 kDa chaperonin"/>
    <property type="match status" value="1"/>
</dbReference>
<dbReference type="Gene3D" id="3.50.7.10">
    <property type="entry name" value="GroEL"/>
    <property type="match status" value="1"/>
</dbReference>
<dbReference type="Gene3D" id="1.10.560.10">
    <property type="entry name" value="GroEL-like equatorial domain"/>
    <property type="match status" value="1"/>
</dbReference>
<dbReference type="Gene3D" id="3.30.260.10">
    <property type="entry name" value="TCP-1-like chaperonin intermediate domain"/>
    <property type="match status" value="1"/>
</dbReference>
<dbReference type="HAMAP" id="MF_00600">
    <property type="entry name" value="CH60"/>
    <property type="match status" value="1"/>
</dbReference>
<dbReference type="InterPro" id="IPR018370">
    <property type="entry name" value="Chaperonin_Cpn60_CS"/>
</dbReference>
<dbReference type="InterPro" id="IPR001844">
    <property type="entry name" value="Cpn60/GroEL"/>
</dbReference>
<dbReference type="InterPro" id="IPR002423">
    <property type="entry name" value="Cpn60/GroEL/TCP-1"/>
</dbReference>
<dbReference type="InterPro" id="IPR027409">
    <property type="entry name" value="GroEL-like_apical_dom_sf"/>
</dbReference>
<dbReference type="InterPro" id="IPR027413">
    <property type="entry name" value="GROEL-like_equatorial_sf"/>
</dbReference>
<dbReference type="InterPro" id="IPR027410">
    <property type="entry name" value="TCP-1-like_intermed_sf"/>
</dbReference>
<dbReference type="NCBIfam" id="TIGR02348">
    <property type="entry name" value="GroEL"/>
    <property type="match status" value="1"/>
</dbReference>
<dbReference type="NCBIfam" id="NF000592">
    <property type="entry name" value="PRK00013.1"/>
    <property type="match status" value="1"/>
</dbReference>
<dbReference type="NCBIfam" id="NF009487">
    <property type="entry name" value="PRK12849.1"/>
    <property type="match status" value="1"/>
</dbReference>
<dbReference type="NCBIfam" id="NF009488">
    <property type="entry name" value="PRK12850.1"/>
    <property type="match status" value="1"/>
</dbReference>
<dbReference type="NCBIfam" id="NF009489">
    <property type="entry name" value="PRK12851.1"/>
    <property type="match status" value="1"/>
</dbReference>
<dbReference type="PANTHER" id="PTHR45633">
    <property type="entry name" value="60 KDA HEAT SHOCK PROTEIN, MITOCHONDRIAL"/>
    <property type="match status" value="1"/>
</dbReference>
<dbReference type="Pfam" id="PF00118">
    <property type="entry name" value="Cpn60_TCP1"/>
    <property type="match status" value="1"/>
</dbReference>
<dbReference type="PRINTS" id="PR00298">
    <property type="entry name" value="CHAPERONIN60"/>
</dbReference>
<dbReference type="SUPFAM" id="SSF52029">
    <property type="entry name" value="GroEL apical domain-like"/>
    <property type="match status" value="1"/>
</dbReference>
<dbReference type="SUPFAM" id="SSF48592">
    <property type="entry name" value="GroEL equatorial domain-like"/>
    <property type="match status" value="1"/>
</dbReference>
<dbReference type="SUPFAM" id="SSF54849">
    <property type="entry name" value="GroEL-intermediate domain like"/>
    <property type="match status" value="1"/>
</dbReference>
<dbReference type="PROSITE" id="PS00296">
    <property type="entry name" value="CHAPERONINS_CPN60"/>
    <property type="match status" value="1"/>
</dbReference>
<name>CH60_ZYMMO</name>
<gene>
    <name evidence="1" type="primary">groEL</name>
    <name evidence="1" type="synonym">groL</name>
    <name type="synonym">mopA</name>
    <name type="ordered locus">ZMO1929</name>
</gene>
<accession>P48220</accession>
<accession>Q5NL57</accession>
<feature type="chain" id="PRO_0000063617" description="Chaperonin GroEL">
    <location>
        <begin position="1"/>
        <end position="546"/>
    </location>
</feature>
<feature type="region of interest" description="Disordered" evidence="2">
    <location>
        <begin position="526"/>
        <end position="546"/>
    </location>
</feature>
<feature type="compositionally biased region" description="Gly residues" evidence="2">
    <location>
        <begin position="536"/>
        <end position="546"/>
    </location>
</feature>
<feature type="binding site" evidence="1">
    <location>
        <begin position="30"/>
        <end position="33"/>
    </location>
    <ligand>
        <name>ATP</name>
        <dbReference type="ChEBI" id="CHEBI:30616"/>
    </ligand>
</feature>
<feature type="binding site" evidence="1">
    <location>
        <position position="51"/>
    </location>
    <ligand>
        <name>ATP</name>
        <dbReference type="ChEBI" id="CHEBI:30616"/>
    </ligand>
</feature>
<feature type="binding site" evidence="1">
    <location>
        <begin position="87"/>
        <end position="91"/>
    </location>
    <ligand>
        <name>ATP</name>
        <dbReference type="ChEBI" id="CHEBI:30616"/>
    </ligand>
</feature>
<feature type="binding site" evidence="1">
    <location>
        <position position="415"/>
    </location>
    <ligand>
        <name>ATP</name>
        <dbReference type="ChEBI" id="CHEBI:30616"/>
    </ligand>
</feature>
<feature type="binding site" evidence="1">
    <location>
        <position position="496"/>
    </location>
    <ligand>
        <name>ATP</name>
        <dbReference type="ChEBI" id="CHEBI:30616"/>
    </ligand>
</feature>
<feature type="sequence conflict" description="In Ref. 1." evidence="3" ref="1">
    <original>RNVVLDKAFGAPRITKDGVSVAKEIELKDKFENMGAQM</original>
    <variation>VTLFWTKPLVLPYHQRWCFCRQRNRTERQVRKYGHRC</variation>
    <location>
        <begin position="36"/>
        <end position="73"/>
    </location>
</feature>
<feature type="sequence conflict" description="In Ref. 1; AAA62399." evidence="3" ref="1">
    <original>A</original>
    <variation>P</variation>
    <location>
        <position position="78"/>
    </location>
</feature>
<feature type="sequence conflict" description="In Ref. 1; AAA62399." evidence="3" ref="1">
    <original>T</original>
    <variation>A</variation>
    <location>
        <position position="425"/>
    </location>
</feature>
<feature type="sequence conflict" description="In Ref. 1." evidence="3" ref="1">
    <original>DF</original>
    <variation>GGMDF</variation>
    <location>
        <begin position="545"/>
        <end position="546"/>
    </location>
</feature>
<proteinExistence type="inferred from homology"/>